<evidence type="ECO:0000255" key="1">
    <source>
        <dbReference type="PROSITE-ProRule" id="PRU00176"/>
    </source>
</evidence>
<evidence type="ECO:0000256" key="2">
    <source>
        <dbReference type="SAM" id="MobiDB-lite"/>
    </source>
</evidence>
<name>RBM18_DANRE</name>
<reference key="1">
    <citation type="submission" date="2003-10" db="EMBL/GenBank/DDBJ databases">
        <authorList>
            <consortium name="NIH - Zebrafish Gene Collection (ZGC) project"/>
        </authorList>
    </citation>
    <scope>NUCLEOTIDE SEQUENCE [LARGE SCALE MRNA]</scope>
    <source>
        <tissue>Eye</tissue>
    </source>
</reference>
<gene>
    <name type="primary">rbm18</name>
    <name type="ORF">zgc:73332</name>
</gene>
<accession>Q6PBM8</accession>
<protein>
    <recommendedName>
        <fullName>Probable RNA-binding protein 18</fullName>
    </recommendedName>
    <alternativeName>
        <fullName>RNA-binding motif protein 18</fullName>
    </alternativeName>
</protein>
<dbReference type="EMBL" id="BC059651">
    <property type="protein sequence ID" value="AAH59651.1"/>
    <property type="molecule type" value="mRNA"/>
</dbReference>
<dbReference type="RefSeq" id="NP_957087.1">
    <property type="nucleotide sequence ID" value="NM_200793.1"/>
</dbReference>
<dbReference type="SMR" id="Q6PBM8"/>
<dbReference type="FunCoup" id="Q6PBM8">
    <property type="interactions" value="1317"/>
</dbReference>
<dbReference type="STRING" id="7955.ENSDARP00000064974"/>
<dbReference type="PaxDb" id="7955-ENSDARP00000064974"/>
<dbReference type="Ensembl" id="ENSDART00000064975">
    <property type="protein sequence ID" value="ENSDARP00000064974"/>
    <property type="gene ID" value="ENSDARG00000044255"/>
</dbReference>
<dbReference type="Ensembl" id="ENSDART00000184997">
    <property type="protein sequence ID" value="ENSDARP00000153616"/>
    <property type="gene ID" value="ENSDARG00000111311"/>
</dbReference>
<dbReference type="GeneID" id="393766"/>
<dbReference type="KEGG" id="dre:393766"/>
<dbReference type="AGR" id="ZFIN:ZDB-GENE-040426-1764"/>
<dbReference type="CTD" id="92400"/>
<dbReference type="ZFIN" id="ZDB-GENE-040426-1764">
    <property type="gene designation" value="rbm18"/>
</dbReference>
<dbReference type="eggNOG" id="ENOG502RH7I">
    <property type="taxonomic scope" value="Eukaryota"/>
</dbReference>
<dbReference type="InParanoid" id="Q6PBM8"/>
<dbReference type="OMA" id="FACGRPL"/>
<dbReference type="OrthoDB" id="6730379at2759"/>
<dbReference type="PhylomeDB" id="Q6PBM8"/>
<dbReference type="TreeFam" id="TF323314"/>
<dbReference type="PRO" id="PR:Q6PBM8"/>
<dbReference type="Proteomes" id="UP000000437">
    <property type="component" value="Alternate scaffold 10"/>
</dbReference>
<dbReference type="Proteomes" id="UP000000437">
    <property type="component" value="Chromosome 10"/>
</dbReference>
<dbReference type="Bgee" id="ENSDARG00000044255">
    <property type="expression patterns" value="Expressed in camera-type eye and 21 other cell types or tissues"/>
</dbReference>
<dbReference type="ExpressionAtlas" id="Q6PBM8">
    <property type="expression patterns" value="baseline and differential"/>
</dbReference>
<dbReference type="GO" id="GO:0003723">
    <property type="term" value="F:RNA binding"/>
    <property type="evidence" value="ECO:0000318"/>
    <property type="project" value="GO_Central"/>
</dbReference>
<dbReference type="CDD" id="cd12355">
    <property type="entry name" value="RRM_RBM18"/>
    <property type="match status" value="1"/>
</dbReference>
<dbReference type="FunFam" id="3.30.70.330:FF:000185">
    <property type="entry name" value="Probable RNA-binding protein 18"/>
    <property type="match status" value="1"/>
</dbReference>
<dbReference type="Gene3D" id="3.30.70.330">
    <property type="match status" value="1"/>
</dbReference>
<dbReference type="InterPro" id="IPR012677">
    <property type="entry name" value="Nucleotide-bd_a/b_plait_sf"/>
</dbReference>
<dbReference type="InterPro" id="IPR035979">
    <property type="entry name" value="RBD_domain_sf"/>
</dbReference>
<dbReference type="InterPro" id="IPR039157">
    <property type="entry name" value="RBM18_RRM"/>
</dbReference>
<dbReference type="InterPro" id="IPR000504">
    <property type="entry name" value="RRM_dom"/>
</dbReference>
<dbReference type="PANTHER" id="PTHR21245">
    <property type="entry name" value="HETEROGENEOUS NUCLEAR RIBONUCLEOPROTEIN"/>
    <property type="match status" value="1"/>
</dbReference>
<dbReference type="Pfam" id="PF00076">
    <property type="entry name" value="RRM_1"/>
    <property type="match status" value="1"/>
</dbReference>
<dbReference type="SMART" id="SM00360">
    <property type="entry name" value="RRM"/>
    <property type="match status" value="1"/>
</dbReference>
<dbReference type="SUPFAM" id="SSF54928">
    <property type="entry name" value="RNA-binding domain, RBD"/>
    <property type="match status" value="1"/>
</dbReference>
<dbReference type="PROSITE" id="PS50102">
    <property type="entry name" value="RRM"/>
    <property type="match status" value="1"/>
</dbReference>
<feature type="chain" id="PRO_0000254125" description="Probable RNA-binding protein 18">
    <location>
        <begin position="1"/>
        <end position="188"/>
    </location>
</feature>
<feature type="domain" description="RRM" evidence="1">
    <location>
        <begin position="23"/>
        <end position="104"/>
    </location>
</feature>
<feature type="region of interest" description="Disordered" evidence="2">
    <location>
        <begin position="151"/>
        <end position="188"/>
    </location>
</feature>
<feature type="compositionally biased region" description="Basic residues" evidence="2">
    <location>
        <begin position="177"/>
        <end position="188"/>
    </location>
</feature>
<sequence length="188" mass="21496">MQSAAETVENASILSGGSAQDGHRLWIGNIDPKITEYHLVKLLEKFGKVKQFDFLFHKSGPLEGQPRGYCFVNFHTKEEAERAIQCLNGKLALSKKLVVRWAHAQRFEPFRGEKNMPASLEPSSSEAEDLPTSLSVNAKIRAIEAKLQMMEENPDDYSGPSAYTYNKPPDKREKRSQPYHKHFRKHRR</sequence>
<organism>
    <name type="scientific">Danio rerio</name>
    <name type="common">Zebrafish</name>
    <name type="synonym">Brachydanio rerio</name>
    <dbReference type="NCBI Taxonomy" id="7955"/>
    <lineage>
        <taxon>Eukaryota</taxon>
        <taxon>Metazoa</taxon>
        <taxon>Chordata</taxon>
        <taxon>Craniata</taxon>
        <taxon>Vertebrata</taxon>
        <taxon>Euteleostomi</taxon>
        <taxon>Actinopterygii</taxon>
        <taxon>Neopterygii</taxon>
        <taxon>Teleostei</taxon>
        <taxon>Ostariophysi</taxon>
        <taxon>Cypriniformes</taxon>
        <taxon>Danionidae</taxon>
        <taxon>Danioninae</taxon>
        <taxon>Danio</taxon>
    </lineage>
</organism>
<proteinExistence type="evidence at transcript level"/>
<keyword id="KW-1185">Reference proteome</keyword>
<keyword id="KW-0694">RNA-binding</keyword>